<comment type="function">
    <text evidence="1">Iron-sulfur protein (IP) subunit of succinate dehydrogenase (SDH) that is involved in complex II of the mitochondrial electron transport chain and is responsible for transferring electrons from succinate to ubiquinone (coenzyme Q).</text>
</comment>
<comment type="catalytic activity">
    <reaction>
        <text>a quinone + succinate = fumarate + a quinol</text>
        <dbReference type="Rhea" id="RHEA:40523"/>
        <dbReference type="ChEBI" id="CHEBI:24646"/>
        <dbReference type="ChEBI" id="CHEBI:29806"/>
        <dbReference type="ChEBI" id="CHEBI:30031"/>
        <dbReference type="ChEBI" id="CHEBI:132124"/>
        <dbReference type="EC" id="1.3.5.1"/>
    </reaction>
</comment>
<comment type="cofactor">
    <cofactor evidence="1">
        <name>[2Fe-2S] cluster</name>
        <dbReference type="ChEBI" id="CHEBI:190135"/>
    </cofactor>
    <text evidence="1">Binds 1 [2Fe-2S] cluster.</text>
</comment>
<comment type="cofactor">
    <cofactor evidence="1">
        <name>[3Fe-4S] cluster</name>
        <dbReference type="ChEBI" id="CHEBI:21137"/>
    </cofactor>
    <text evidence="1">Binds 1 [3Fe-4S] cluster.</text>
</comment>
<comment type="cofactor">
    <cofactor evidence="1">
        <name>[4Fe-4S] cluster</name>
        <dbReference type="ChEBI" id="CHEBI:49883"/>
    </cofactor>
    <text evidence="1">Binds 1 [4Fe-4S] cluster.</text>
</comment>
<comment type="pathway">
    <text>Carbohydrate metabolism; tricarboxylic acid cycle; fumarate from succinate (eukaryal route): step 1/1.</text>
</comment>
<comment type="subunit">
    <text evidence="1">Component of complex II composed of four subunits: a flavoprotein (FP), an iron-sulfur protein (IP), and a cytochrome b composed of a large and a small subunit.</text>
</comment>
<comment type="subcellular location">
    <subcellularLocation>
        <location evidence="1">Mitochondrion inner membrane</location>
        <topology evidence="1">Peripheral membrane protein</topology>
        <orientation evidence="1">Matrix side</orientation>
    </subcellularLocation>
</comment>
<comment type="similarity">
    <text evidence="2">Belongs to the succinate dehydrogenase/fumarate reductase iron-sulfur protein family.</text>
</comment>
<keyword id="KW-0001">2Fe-2S</keyword>
<keyword id="KW-0003">3Fe-4S</keyword>
<keyword id="KW-0004">4Fe-4S</keyword>
<keyword id="KW-0249">Electron transport</keyword>
<keyword id="KW-0408">Iron</keyword>
<keyword id="KW-0411">Iron-sulfur</keyword>
<keyword id="KW-0472">Membrane</keyword>
<keyword id="KW-0479">Metal-binding</keyword>
<keyword id="KW-0496">Mitochondrion</keyword>
<keyword id="KW-0999">Mitochondrion inner membrane</keyword>
<keyword id="KW-0560">Oxidoreductase</keyword>
<keyword id="KW-1185">Reference proteome</keyword>
<keyword id="KW-0809">Transit peptide</keyword>
<keyword id="KW-0813">Transport</keyword>
<keyword id="KW-0816">Tricarboxylic acid cycle</keyword>
<gene>
    <name evidence="5" type="primary">sdhb-1</name>
    <name type="ORF">CBG00872</name>
</gene>
<feature type="transit peptide" description="Mitochondrion" evidence="2">
    <location>
        <begin position="1"/>
        <end status="unknown"/>
    </location>
</feature>
<feature type="chain" id="PRO_0000367044" description="Succinate dehydrogenase [ubiquinone] iron-sulfur subunit, mitochondrial" evidence="2">
    <location>
        <begin status="unknown"/>
        <end position="282"/>
    </location>
</feature>
<feature type="domain" description="2Fe-2S ferredoxin-type" evidence="3">
    <location>
        <begin position="43"/>
        <end position="131"/>
    </location>
</feature>
<feature type="domain" description="4Fe-4S ferredoxin-type" evidence="4">
    <location>
        <begin position="174"/>
        <end position="204"/>
    </location>
</feature>
<feature type="binding site" evidence="1">
    <location>
        <position position="91"/>
    </location>
    <ligand>
        <name>[2Fe-2S] cluster</name>
        <dbReference type="ChEBI" id="CHEBI:190135"/>
    </ligand>
</feature>
<feature type="binding site" evidence="1">
    <location>
        <position position="96"/>
    </location>
    <ligand>
        <name>[2Fe-2S] cluster</name>
        <dbReference type="ChEBI" id="CHEBI:190135"/>
    </ligand>
</feature>
<feature type="binding site" evidence="1">
    <location>
        <position position="99"/>
    </location>
    <ligand>
        <name>[2Fe-2S] cluster</name>
        <dbReference type="ChEBI" id="CHEBI:190135"/>
    </ligand>
</feature>
<feature type="binding site" evidence="1">
    <location>
        <position position="111"/>
    </location>
    <ligand>
        <name>[2Fe-2S] cluster</name>
        <dbReference type="ChEBI" id="CHEBI:190135"/>
    </ligand>
</feature>
<feature type="binding site" evidence="1">
    <location>
        <position position="184"/>
    </location>
    <ligand>
        <name>[4Fe-4S] cluster</name>
        <dbReference type="ChEBI" id="CHEBI:49883"/>
    </ligand>
</feature>
<feature type="binding site" evidence="1">
    <location>
        <position position="187"/>
    </location>
    <ligand>
        <name>[4Fe-4S] cluster</name>
        <dbReference type="ChEBI" id="CHEBI:49883"/>
    </ligand>
</feature>
<feature type="binding site" evidence="1">
    <location>
        <position position="190"/>
    </location>
    <ligand>
        <name>[4Fe-4S] cluster</name>
        <dbReference type="ChEBI" id="CHEBI:49883"/>
    </ligand>
</feature>
<feature type="binding site" evidence="1">
    <location>
        <position position="194"/>
    </location>
    <ligand>
        <name>[3Fe-4S] cluster</name>
        <dbReference type="ChEBI" id="CHEBI:21137"/>
    </ligand>
</feature>
<feature type="binding site" evidence="1">
    <location>
        <position position="199"/>
    </location>
    <ligand>
        <name>a ubiquinone</name>
        <dbReference type="ChEBI" id="CHEBI:16389"/>
        <note>ligand shared with DHSD</note>
    </ligand>
</feature>
<feature type="binding site" evidence="1">
    <location>
        <position position="241"/>
    </location>
    <ligand>
        <name>[3Fe-4S] cluster</name>
        <dbReference type="ChEBI" id="CHEBI:21137"/>
    </ligand>
</feature>
<feature type="binding site" evidence="1">
    <location>
        <position position="247"/>
    </location>
    <ligand>
        <name>[3Fe-4S] cluster</name>
        <dbReference type="ChEBI" id="CHEBI:21137"/>
    </ligand>
</feature>
<feature type="binding site" evidence="1">
    <location>
        <position position="251"/>
    </location>
    <ligand>
        <name>[4Fe-4S] cluster</name>
        <dbReference type="ChEBI" id="CHEBI:49883"/>
    </ligand>
</feature>
<organism>
    <name type="scientific">Caenorhabditis briggsae</name>
    <dbReference type="NCBI Taxonomy" id="6238"/>
    <lineage>
        <taxon>Eukaryota</taxon>
        <taxon>Metazoa</taxon>
        <taxon>Ecdysozoa</taxon>
        <taxon>Nematoda</taxon>
        <taxon>Chromadorea</taxon>
        <taxon>Rhabditida</taxon>
        <taxon>Rhabditina</taxon>
        <taxon>Rhabditomorpha</taxon>
        <taxon>Rhabditoidea</taxon>
        <taxon>Rhabditidae</taxon>
        <taxon>Peloderinae</taxon>
        <taxon>Caenorhabditis</taxon>
    </lineage>
</organism>
<accession>A8WPF0</accession>
<proteinExistence type="inferred from homology"/>
<name>SDHB_CAEBR</name>
<sequence length="282" mass="31343">MLARSALFVHSAELAANAARAASGAAAAQPKKTGNRIKTFEIYRFNPEAPGAKPTIQKFDVDLDQCGTMILDALIKIKNEVDPTLTFRRSCREGICGSCAMNIGGENTLACICKIDADTSKSTKIYPLPHMFVVKDLVPDMNLFYAQYASIQPWIQKKTPLTLGEKQMHQSVAERDRLDGLYECILCACCSTSCPSYWWNADKYLGPAVLMQAYRWVIDSRDDYAQERLHRMHDSFSAFKCHTIMNCTKTCPKHLNPAKAIGEIKSLLTGFKSKPAAEPSAF</sequence>
<protein>
    <recommendedName>
        <fullName evidence="1">Succinate dehydrogenase [ubiquinone] iron-sulfur subunit, mitochondrial</fullName>
        <ecNumber>1.3.5.1</ecNumber>
    </recommendedName>
    <alternativeName>
        <fullName evidence="1">Iron-sulfur subunit of complex II</fullName>
        <shortName evidence="1">Ip</shortName>
    </alternativeName>
</protein>
<dbReference type="EC" id="1.3.5.1"/>
<dbReference type="EMBL" id="HE600951">
    <property type="protein sequence ID" value="CAP22357.2"/>
    <property type="molecule type" value="Genomic_DNA"/>
</dbReference>
<dbReference type="SMR" id="A8WPF0"/>
<dbReference type="FunCoup" id="A8WPF0">
    <property type="interactions" value="1908"/>
</dbReference>
<dbReference type="STRING" id="6238.A8WPF0"/>
<dbReference type="EnsemblMetazoa" id="CBG00872.1">
    <property type="protein sequence ID" value="CBG00872.1"/>
    <property type="gene ID" value="WBGene00024197"/>
</dbReference>
<dbReference type="WormBase" id="CBG00872">
    <property type="protein sequence ID" value="CBP34424"/>
    <property type="gene ID" value="WBGene00024197"/>
    <property type="gene designation" value="Cbr-sdhb-1"/>
</dbReference>
<dbReference type="eggNOG" id="KOG3049">
    <property type="taxonomic scope" value="Eukaryota"/>
</dbReference>
<dbReference type="HOGENOM" id="CLU_044838_0_2_1"/>
<dbReference type="InParanoid" id="A8WPF0"/>
<dbReference type="OMA" id="DGQYFGP"/>
<dbReference type="UniPathway" id="UPA00223">
    <property type="reaction ID" value="UER01006"/>
</dbReference>
<dbReference type="Proteomes" id="UP000008549">
    <property type="component" value="Unassembled WGS sequence"/>
</dbReference>
<dbReference type="GO" id="GO:0005743">
    <property type="term" value="C:mitochondrial inner membrane"/>
    <property type="evidence" value="ECO:0000250"/>
    <property type="project" value="UniProtKB"/>
</dbReference>
<dbReference type="GO" id="GO:0031966">
    <property type="term" value="C:mitochondrial membrane"/>
    <property type="evidence" value="ECO:0000318"/>
    <property type="project" value="GO_Central"/>
</dbReference>
<dbReference type="GO" id="GO:0045273">
    <property type="term" value="C:respiratory chain complex II (succinate dehydrogenase)"/>
    <property type="evidence" value="ECO:0000250"/>
    <property type="project" value="UniProtKB"/>
</dbReference>
<dbReference type="GO" id="GO:0051537">
    <property type="term" value="F:2 iron, 2 sulfur cluster binding"/>
    <property type="evidence" value="ECO:0000250"/>
    <property type="project" value="UniProtKB"/>
</dbReference>
<dbReference type="GO" id="GO:0051538">
    <property type="term" value="F:3 iron, 4 sulfur cluster binding"/>
    <property type="evidence" value="ECO:0000250"/>
    <property type="project" value="UniProtKB"/>
</dbReference>
<dbReference type="GO" id="GO:0051539">
    <property type="term" value="F:4 iron, 4 sulfur cluster binding"/>
    <property type="evidence" value="ECO:0000250"/>
    <property type="project" value="UniProtKB"/>
</dbReference>
<dbReference type="GO" id="GO:0009055">
    <property type="term" value="F:electron transfer activity"/>
    <property type="evidence" value="ECO:0007669"/>
    <property type="project" value="InterPro"/>
</dbReference>
<dbReference type="GO" id="GO:0046872">
    <property type="term" value="F:metal ion binding"/>
    <property type="evidence" value="ECO:0007669"/>
    <property type="project" value="UniProtKB-KW"/>
</dbReference>
<dbReference type="GO" id="GO:0008177">
    <property type="term" value="F:succinate dehydrogenase (quinone) activity"/>
    <property type="evidence" value="ECO:0007669"/>
    <property type="project" value="UniProtKB-EC"/>
</dbReference>
<dbReference type="GO" id="GO:0048039">
    <property type="term" value="F:ubiquinone binding"/>
    <property type="evidence" value="ECO:0000250"/>
    <property type="project" value="UniProtKB"/>
</dbReference>
<dbReference type="GO" id="GO:0009060">
    <property type="term" value="P:aerobic respiration"/>
    <property type="evidence" value="ECO:0000318"/>
    <property type="project" value="GO_Central"/>
</dbReference>
<dbReference type="GO" id="GO:0022904">
    <property type="term" value="P:respiratory electron transport chain"/>
    <property type="evidence" value="ECO:0000318"/>
    <property type="project" value="GO_Central"/>
</dbReference>
<dbReference type="GO" id="GO:0006099">
    <property type="term" value="P:tricarboxylic acid cycle"/>
    <property type="evidence" value="ECO:0007669"/>
    <property type="project" value="UniProtKB-UniPathway"/>
</dbReference>
<dbReference type="CDD" id="cd00207">
    <property type="entry name" value="fer2"/>
    <property type="match status" value="1"/>
</dbReference>
<dbReference type="FunFam" id="1.10.1060.10:FF:000029">
    <property type="entry name" value="Succinate dehydrogenase [ubiquinone] iron-sulfur subunit, mitochondrial"/>
    <property type="match status" value="1"/>
</dbReference>
<dbReference type="FunFam" id="3.10.20.30:FF:000007">
    <property type="entry name" value="Succinate dehydrogenase [ubiquinone] iron-sulfur subunit, mitochondrial"/>
    <property type="match status" value="1"/>
</dbReference>
<dbReference type="Gene3D" id="3.10.20.30">
    <property type="match status" value="1"/>
</dbReference>
<dbReference type="Gene3D" id="1.10.1060.10">
    <property type="entry name" value="Alpha-helical ferredoxin"/>
    <property type="match status" value="1"/>
</dbReference>
<dbReference type="InterPro" id="IPR036010">
    <property type="entry name" value="2Fe-2S_ferredoxin-like_sf"/>
</dbReference>
<dbReference type="InterPro" id="IPR001041">
    <property type="entry name" value="2Fe-2S_ferredoxin-type"/>
</dbReference>
<dbReference type="InterPro" id="IPR006058">
    <property type="entry name" value="2Fe2S_fd_BS"/>
</dbReference>
<dbReference type="InterPro" id="IPR017896">
    <property type="entry name" value="4Fe4S_Fe-S-bd"/>
</dbReference>
<dbReference type="InterPro" id="IPR017900">
    <property type="entry name" value="4Fe4S_Fe_S_CS"/>
</dbReference>
<dbReference type="InterPro" id="IPR012675">
    <property type="entry name" value="Beta-grasp_dom_sf"/>
</dbReference>
<dbReference type="InterPro" id="IPR009051">
    <property type="entry name" value="Helical_ferredxn"/>
</dbReference>
<dbReference type="InterPro" id="IPR050573">
    <property type="entry name" value="SDH/FRD_Iron-Sulfur"/>
</dbReference>
<dbReference type="InterPro" id="IPR004489">
    <property type="entry name" value="Succ_DH/fum_Rdtase_Fe-S"/>
</dbReference>
<dbReference type="InterPro" id="IPR025192">
    <property type="entry name" value="Succ_DH/fum_Rdtase_N"/>
</dbReference>
<dbReference type="NCBIfam" id="TIGR00384">
    <property type="entry name" value="dhsB"/>
    <property type="match status" value="1"/>
</dbReference>
<dbReference type="NCBIfam" id="NF004616">
    <property type="entry name" value="PRK05950.1"/>
    <property type="match status" value="1"/>
</dbReference>
<dbReference type="PANTHER" id="PTHR11921:SF29">
    <property type="entry name" value="SUCCINATE DEHYDROGENASE [UBIQUINONE] IRON-SULFUR SUBUNIT, MITOCHONDRIAL"/>
    <property type="match status" value="1"/>
</dbReference>
<dbReference type="PANTHER" id="PTHR11921">
    <property type="entry name" value="SUCCINATE DEHYDROGENASE IRON-SULFUR PROTEIN"/>
    <property type="match status" value="1"/>
</dbReference>
<dbReference type="Pfam" id="PF13085">
    <property type="entry name" value="Fer2_3"/>
    <property type="match status" value="1"/>
</dbReference>
<dbReference type="Pfam" id="PF13534">
    <property type="entry name" value="Fer4_17"/>
    <property type="match status" value="1"/>
</dbReference>
<dbReference type="SUPFAM" id="SSF54292">
    <property type="entry name" value="2Fe-2S ferredoxin-like"/>
    <property type="match status" value="1"/>
</dbReference>
<dbReference type="SUPFAM" id="SSF46548">
    <property type="entry name" value="alpha-helical ferredoxin"/>
    <property type="match status" value="1"/>
</dbReference>
<dbReference type="PROSITE" id="PS00197">
    <property type="entry name" value="2FE2S_FER_1"/>
    <property type="match status" value="1"/>
</dbReference>
<dbReference type="PROSITE" id="PS51085">
    <property type="entry name" value="2FE2S_FER_2"/>
    <property type="match status" value="1"/>
</dbReference>
<dbReference type="PROSITE" id="PS00198">
    <property type="entry name" value="4FE4S_FER_1"/>
    <property type="match status" value="1"/>
</dbReference>
<dbReference type="PROSITE" id="PS51379">
    <property type="entry name" value="4FE4S_FER_2"/>
    <property type="match status" value="1"/>
</dbReference>
<reference evidence="5" key="1">
    <citation type="journal article" date="2003" name="PLoS Biol.">
        <title>The genome sequence of Caenorhabditis briggsae: a platform for comparative genomics.</title>
        <authorList>
            <person name="Stein L.D."/>
            <person name="Bao Z."/>
            <person name="Blasiar D."/>
            <person name="Blumenthal T."/>
            <person name="Brent M.R."/>
            <person name="Chen N."/>
            <person name="Chinwalla A."/>
            <person name="Clarke L."/>
            <person name="Clee C."/>
            <person name="Coghlan A."/>
            <person name="Coulson A."/>
            <person name="D'Eustachio P."/>
            <person name="Fitch D.H.A."/>
            <person name="Fulton L.A."/>
            <person name="Fulton R.E."/>
            <person name="Griffiths-Jones S."/>
            <person name="Harris T.W."/>
            <person name="Hillier L.W."/>
            <person name="Kamath R."/>
            <person name="Kuwabara P.E."/>
            <person name="Mardis E.R."/>
            <person name="Marra M.A."/>
            <person name="Miner T.L."/>
            <person name="Minx P."/>
            <person name="Mullikin J.C."/>
            <person name="Plumb R.W."/>
            <person name="Rogers J."/>
            <person name="Schein J.E."/>
            <person name="Sohrmann M."/>
            <person name="Spieth J."/>
            <person name="Stajich J.E."/>
            <person name="Wei C."/>
            <person name="Willey D."/>
            <person name="Wilson R.K."/>
            <person name="Durbin R.M."/>
            <person name="Waterston R.H."/>
        </authorList>
    </citation>
    <scope>NUCLEOTIDE SEQUENCE [LARGE SCALE GENOMIC DNA]</scope>
    <source>
        <strain evidence="5">AF16</strain>
    </source>
</reference>
<evidence type="ECO:0000250" key="1">
    <source>
        <dbReference type="UniProtKB" id="Q9YHT2"/>
    </source>
</evidence>
<evidence type="ECO:0000255" key="2"/>
<evidence type="ECO:0000255" key="3">
    <source>
        <dbReference type="PROSITE-ProRule" id="PRU00465"/>
    </source>
</evidence>
<evidence type="ECO:0000255" key="4">
    <source>
        <dbReference type="PROSITE-ProRule" id="PRU00711"/>
    </source>
</evidence>
<evidence type="ECO:0000312" key="5">
    <source>
        <dbReference type="EMBL" id="CAP22357.2"/>
    </source>
</evidence>